<accession>Q93MM7</accession>
<accession>Q38XW5</accession>
<proteinExistence type="inferred from homology"/>
<organism>
    <name type="scientific">Latilactobacillus sakei subsp. sakei (strain 23K)</name>
    <name type="common">Lactobacillus sakei subsp. sakei</name>
    <dbReference type="NCBI Taxonomy" id="314315"/>
    <lineage>
        <taxon>Bacteria</taxon>
        <taxon>Bacillati</taxon>
        <taxon>Bacillota</taxon>
        <taxon>Bacilli</taxon>
        <taxon>Lactobacillales</taxon>
        <taxon>Lactobacillaceae</taxon>
        <taxon>Latilactobacillus</taxon>
    </lineage>
</organism>
<evidence type="ECO:0000255" key="1">
    <source>
        <dbReference type="HAMAP-Rule" id="MF_00741"/>
    </source>
</evidence>
<protein>
    <recommendedName>
        <fullName evidence="1">Phosphoribosylformylglycinamidine cyclo-ligase</fullName>
        <ecNumber evidence="1">6.3.3.1</ecNumber>
    </recommendedName>
    <alternativeName>
        <fullName evidence="1">AIR synthase</fullName>
    </alternativeName>
    <alternativeName>
        <fullName evidence="1">AIRS</fullName>
    </alternativeName>
    <alternativeName>
        <fullName evidence="1">Phosphoribosyl-aminoimidazole synthetase</fullName>
    </alternativeName>
</protein>
<sequence>MTDAYQKAGVDVTAGYEVVARIQKKVGADNHNIGSFGGQYALEMAQYQKPVLVSSTDGVGTKLMVAFAADQHATIGIDCVAMCVNDIVAQGAQPLYFLDYLATGKTDPDKIEDIVAGVLEGCKQANMALIGGETAEMPGMYAAKHYDVAGFAVGIAEQDALVTGETIQAGDVLIGLASSGIHSNGYSLVRKIFFEQNNLTVASQLPELPGKTLGDWLLTPTKIYVEDLQPLLQQRVIKGAAHITGGGFIENVPRMLPADLAAHLTLGSWPILPIFKALQQYGQLAEMEMYNIFNMGIGMVLAVAPEAAPAVLAQLNAKQEQAYQIGTVQKRQQAAVELVTAK</sequence>
<name>PUR5_LATSS</name>
<feature type="chain" id="PRO_0000148218" description="Phosphoribosylformylglycinamidine cyclo-ligase">
    <location>
        <begin position="1"/>
        <end position="342"/>
    </location>
</feature>
<gene>
    <name evidence="1" type="primary">purM</name>
    <name type="ordered locus">LCA_0660</name>
</gene>
<comment type="catalytic activity">
    <reaction evidence="1">
        <text>2-formamido-N(1)-(5-O-phospho-beta-D-ribosyl)acetamidine + ATP = 5-amino-1-(5-phospho-beta-D-ribosyl)imidazole + ADP + phosphate + H(+)</text>
        <dbReference type="Rhea" id="RHEA:23032"/>
        <dbReference type="ChEBI" id="CHEBI:15378"/>
        <dbReference type="ChEBI" id="CHEBI:30616"/>
        <dbReference type="ChEBI" id="CHEBI:43474"/>
        <dbReference type="ChEBI" id="CHEBI:137981"/>
        <dbReference type="ChEBI" id="CHEBI:147287"/>
        <dbReference type="ChEBI" id="CHEBI:456216"/>
        <dbReference type="EC" id="6.3.3.1"/>
    </reaction>
</comment>
<comment type="pathway">
    <text evidence="1">Purine metabolism; IMP biosynthesis via de novo pathway; 5-amino-1-(5-phospho-D-ribosyl)imidazole from N(2)-formyl-N(1)-(5-phospho-D-ribosyl)glycinamide: step 2/2.</text>
</comment>
<comment type="subcellular location">
    <subcellularLocation>
        <location evidence="1">Cytoplasm</location>
    </subcellularLocation>
</comment>
<comment type="similarity">
    <text evidence="1">Belongs to the AIR synthase family.</text>
</comment>
<keyword id="KW-0067">ATP-binding</keyword>
<keyword id="KW-0963">Cytoplasm</keyword>
<keyword id="KW-0436">Ligase</keyword>
<keyword id="KW-0547">Nucleotide-binding</keyword>
<keyword id="KW-0658">Purine biosynthesis</keyword>
<keyword id="KW-1185">Reference proteome</keyword>
<reference key="1">
    <citation type="journal article" date="2002" name="Microbiology">
        <title>Physical and genetic map of the Lactobacillus sakei 23K chromosome.</title>
        <authorList>
            <person name="Dudez A.-M."/>
            <person name="Chaillou S."/>
            <person name="Hissler L."/>
            <person name="Stentz R."/>
            <person name="Champomier-Verges M.-C."/>
            <person name="Alpert C.-A."/>
            <person name="Zagorec M."/>
        </authorList>
    </citation>
    <scope>NUCLEOTIDE SEQUENCE [GENOMIC DNA]</scope>
</reference>
<reference key="2">
    <citation type="journal article" date="2005" name="Nat. Biotechnol.">
        <title>The complete genome sequence of the meat-borne lactic acid bacterium Lactobacillus sakei 23K.</title>
        <authorList>
            <person name="Chaillou S."/>
            <person name="Champomier-Verges M.-C."/>
            <person name="Cornet M."/>
            <person name="Crutz-Le Coq A.-M."/>
            <person name="Dudez A.-M."/>
            <person name="Martin V."/>
            <person name="Beaufils S."/>
            <person name="Darbon-Rongere E."/>
            <person name="Bossy R."/>
            <person name="Loux V."/>
            <person name="Zagorec M."/>
        </authorList>
    </citation>
    <scope>NUCLEOTIDE SEQUENCE [LARGE SCALE GENOMIC DNA]</scope>
    <source>
        <strain>23K</strain>
    </source>
</reference>
<dbReference type="EC" id="6.3.3.1" evidence="1"/>
<dbReference type="EMBL" id="AF401037">
    <property type="protein sequence ID" value="AAK92512.1"/>
    <property type="molecule type" value="Genomic_DNA"/>
</dbReference>
<dbReference type="EMBL" id="CR936503">
    <property type="protein sequence ID" value="CAI54964.1"/>
    <property type="molecule type" value="Genomic_DNA"/>
</dbReference>
<dbReference type="RefSeq" id="WP_011374369.1">
    <property type="nucleotide sequence ID" value="NC_007576.1"/>
</dbReference>
<dbReference type="SMR" id="Q93MM7"/>
<dbReference type="STRING" id="314315.LCA_0660"/>
<dbReference type="KEGG" id="lsa:LCA_0660"/>
<dbReference type="eggNOG" id="COG0150">
    <property type="taxonomic scope" value="Bacteria"/>
</dbReference>
<dbReference type="HOGENOM" id="CLU_047116_0_0_9"/>
<dbReference type="OrthoDB" id="9802507at2"/>
<dbReference type="UniPathway" id="UPA00074">
    <property type="reaction ID" value="UER00129"/>
</dbReference>
<dbReference type="Proteomes" id="UP000002707">
    <property type="component" value="Chromosome"/>
</dbReference>
<dbReference type="GO" id="GO:0005829">
    <property type="term" value="C:cytosol"/>
    <property type="evidence" value="ECO:0007669"/>
    <property type="project" value="TreeGrafter"/>
</dbReference>
<dbReference type="GO" id="GO:0005524">
    <property type="term" value="F:ATP binding"/>
    <property type="evidence" value="ECO:0007669"/>
    <property type="project" value="UniProtKB-KW"/>
</dbReference>
<dbReference type="GO" id="GO:0004637">
    <property type="term" value="F:phosphoribosylamine-glycine ligase activity"/>
    <property type="evidence" value="ECO:0007669"/>
    <property type="project" value="TreeGrafter"/>
</dbReference>
<dbReference type="GO" id="GO:0004641">
    <property type="term" value="F:phosphoribosylformylglycinamidine cyclo-ligase activity"/>
    <property type="evidence" value="ECO:0007669"/>
    <property type="project" value="UniProtKB-UniRule"/>
</dbReference>
<dbReference type="GO" id="GO:0006189">
    <property type="term" value="P:'de novo' IMP biosynthetic process"/>
    <property type="evidence" value="ECO:0007669"/>
    <property type="project" value="UniProtKB-UniRule"/>
</dbReference>
<dbReference type="GO" id="GO:0046084">
    <property type="term" value="P:adenine biosynthetic process"/>
    <property type="evidence" value="ECO:0007669"/>
    <property type="project" value="TreeGrafter"/>
</dbReference>
<dbReference type="CDD" id="cd02196">
    <property type="entry name" value="PurM"/>
    <property type="match status" value="1"/>
</dbReference>
<dbReference type="FunFam" id="3.30.1330.10:FF:000001">
    <property type="entry name" value="Phosphoribosylformylglycinamidine cyclo-ligase"/>
    <property type="match status" value="1"/>
</dbReference>
<dbReference type="FunFam" id="3.90.650.10:FF:000001">
    <property type="entry name" value="Phosphoribosylformylglycinamidine cyclo-ligase"/>
    <property type="match status" value="1"/>
</dbReference>
<dbReference type="Gene3D" id="3.90.650.10">
    <property type="entry name" value="PurM-like C-terminal domain"/>
    <property type="match status" value="1"/>
</dbReference>
<dbReference type="Gene3D" id="3.30.1330.10">
    <property type="entry name" value="PurM-like, N-terminal domain"/>
    <property type="match status" value="1"/>
</dbReference>
<dbReference type="HAMAP" id="MF_00741">
    <property type="entry name" value="AIRS"/>
    <property type="match status" value="1"/>
</dbReference>
<dbReference type="InterPro" id="IPR010918">
    <property type="entry name" value="PurM-like_C_dom"/>
</dbReference>
<dbReference type="InterPro" id="IPR036676">
    <property type="entry name" value="PurM-like_C_sf"/>
</dbReference>
<dbReference type="InterPro" id="IPR016188">
    <property type="entry name" value="PurM-like_N"/>
</dbReference>
<dbReference type="InterPro" id="IPR036921">
    <property type="entry name" value="PurM-like_N_sf"/>
</dbReference>
<dbReference type="InterPro" id="IPR004733">
    <property type="entry name" value="PurM_cligase"/>
</dbReference>
<dbReference type="NCBIfam" id="TIGR00878">
    <property type="entry name" value="purM"/>
    <property type="match status" value="1"/>
</dbReference>
<dbReference type="PANTHER" id="PTHR10520:SF12">
    <property type="entry name" value="TRIFUNCTIONAL PURINE BIOSYNTHETIC PROTEIN ADENOSINE-3"/>
    <property type="match status" value="1"/>
</dbReference>
<dbReference type="PANTHER" id="PTHR10520">
    <property type="entry name" value="TRIFUNCTIONAL PURINE BIOSYNTHETIC PROTEIN ADENOSINE-3-RELATED"/>
    <property type="match status" value="1"/>
</dbReference>
<dbReference type="Pfam" id="PF00586">
    <property type="entry name" value="AIRS"/>
    <property type="match status" value="1"/>
</dbReference>
<dbReference type="Pfam" id="PF02769">
    <property type="entry name" value="AIRS_C"/>
    <property type="match status" value="1"/>
</dbReference>
<dbReference type="SUPFAM" id="SSF56042">
    <property type="entry name" value="PurM C-terminal domain-like"/>
    <property type="match status" value="1"/>
</dbReference>
<dbReference type="SUPFAM" id="SSF55326">
    <property type="entry name" value="PurM N-terminal domain-like"/>
    <property type="match status" value="1"/>
</dbReference>